<sequence length="548" mass="60299">MSNKPFHYQAPFPLKKDDTEYYLLTSEHVSVSEFEGQEILKVAPEALTLLARQAFHDASFMLRPAHQQQVADILRDPEASENDKYVALQFLRNSDIAAKGVLPTCQDTGTAIIVGKKGQRVWTGGGDEAALARGVYNTYIEDNLRYSQNAPLDMYKEVNTGTNLPAQIDLYAVDGDEYKFLCIAKGGGSANKTYLYQETKALLTPGKLKNYLVEKMRTLGTAACPPYHIAFVIGGTSAETNLKTVKLASAKYYDELPTEGNEHGQAFRDVELEKELLIEAQNLGLGAQFGGKYFAHDIRVIRLPRHGASCPVGMGVSCSADRNIKAKINRQGIWIEKLEHNPGKYIPEELRKAGEGEAVRVDLNRPMKEILAQLSQYPVSTRLSLNGTIIVGRDIAHAKLKERMDNGEGLPQYIKDHPIYYAGPAKTPEGYASGSLGPTTAGRMDSYVDQLQAQGGSMIMLAKGNRSQQVTDACKKHGGFYLGSIGGPAAVLAQGSIKSLECVEYPELGMEAIWKIEVEDFPAFILVDDKGNDFFQQIQLTQCTRCVK</sequence>
<reference key="1">
    <citation type="journal article" date="1984" name="Nucleic Acids Res.">
        <title>Complete nucleotide sequence of the fumarase gene fumA, of Escherichia coli.</title>
        <authorList>
            <person name="Miles J.S."/>
            <person name="Guest J.R."/>
        </authorList>
    </citation>
    <scope>NUCLEOTIDE SEQUENCE [GENOMIC DNA]</scope>
</reference>
<reference key="2">
    <citation type="journal article" date="1996" name="DNA Res.">
        <title>A 570-kb DNA sequence of the Escherichia coli K-12 genome corresponding to the 28.0-40.1 min region on the linkage map.</title>
        <authorList>
            <person name="Aiba H."/>
            <person name="Baba T."/>
            <person name="Fujita K."/>
            <person name="Hayashi K."/>
            <person name="Inada T."/>
            <person name="Isono K."/>
            <person name="Itoh T."/>
            <person name="Kasai H."/>
            <person name="Kashimoto K."/>
            <person name="Kimura S."/>
            <person name="Kitakawa M."/>
            <person name="Kitagawa M."/>
            <person name="Makino K."/>
            <person name="Miki T."/>
            <person name="Mizobuchi K."/>
            <person name="Mori H."/>
            <person name="Mori T."/>
            <person name="Motomura K."/>
            <person name="Nakade S."/>
            <person name="Nakamura Y."/>
            <person name="Nashimoto H."/>
            <person name="Nishio Y."/>
            <person name="Oshima T."/>
            <person name="Saito N."/>
            <person name="Sampei G."/>
            <person name="Seki Y."/>
            <person name="Sivasundaram S."/>
            <person name="Tagami H."/>
            <person name="Takeda J."/>
            <person name="Takemoto K."/>
            <person name="Takeuchi Y."/>
            <person name="Wada C."/>
            <person name="Yamamoto Y."/>
            <person name="Horiuchi T."/>
        </authorList>
    </citation>
    <scope>NUCLEOTIDE SEQUENCE [LARGE SCALE GENOMIC DNA]</scope>
    <source>
        <strain>K12 / W3110 / ATCC 27325 / DSM 5911</strain>
    </source>
</reference>
<reference key="3">
    <citation type="journal article" date="1997" name="Science">
        <title>The complete genome sequence of Escherichia coli K-12.</title>
        <authorList>
            <person name="Blattner F.R."/>
            <person name="Plunkett G. III"/>
            <person name="Bloch C.A."/>
            <person name="Perna N.T."/>
            <person name="Burland V."/>
            <person name="Riley M."/>
            <person name="Collado-Vides J."/>
            <person name="Glasner J.D."/>
            <person name="Rode C.K."/>
            <person name="Mayhew G.F."/>
            <person name="Gregor J."/>
            <person name="Davis N.W."/>
            <person name="Kirkpatrick H.A."/>
            <person name="Goeden M.A."/>
            <person name="Rose D.J."/>
            <person name="Mau B."/>
            <person name="Shao Y."/>
        </authorList>
    </citation>
    <scope>NUCLEOTIDE SEQUENCE [LARGE SCALE GENOMIC DNA]</scope>
    <source>
        <strain>K12 / MG1655 / ATCC 47076</strain>
    </source>
</reference>
<reference key="4">
    <citation type="journal article" date="2006" name="Mol. Syst. Biol.">
        <title>Highly accurate genome sequences of Escherichia coli K-12 strains MG1655 and W3110.</title>
        <authorList>
            <person name="Hayashi K."/>
            <person name="Morooka N."/>
            <person name="Yamamoto Y."/>
            <person name="Fujita K."/>
            <person name="Isono K."/>
            <person name="Choi S."/>
            <person name="Ohtsubo E."/>
            <person name="Baba T."/>
            <person name="Wanner B.L."/>
            <person name="Mori H."/>
            <person name="Horiuchi T."/>
        </authorList>
    </citation>
    <scope>NUCLEOTIDE SEQUENCE [LARGE SCALE GENOMIC DNA]</scope>
    <source>
        <strain>K12 / W3110 / ATCC 27325 / DSM 5911</strain>
    </source>
</reference>
<reference key="5">
    <citation type="journal article" date="1991" name="J. Biochem.">
        <title>Purification and characterization of two types of fumarase from Escherichia coli.</title>
        <authorList>
            <person name="Ueda Y."/>
            <person name="Yumoto N."/>
            <person name="Tokushige M."/>
            <person name="Fukui K."/>
            <person name="Ohya-Nishiguchi H."/>
        </authorList>
    </citation>
    <scope>NUCLEOTIDE SEQUENCE [GENOMIC DNA] OF 1-21</scope>
    <source>
        <strain>W / ATCC 11105 / DSM 1900</strain>
    </source>
</reference>
<reference key="6">
    <citation type="journal article" date="1997" name="Electrophoresis">
        <title>Comparing the predicted and observed properties of proteins encoded in the genome of Escherichia coli K-12.</title>
        <authorList>
            <person name="Link A.J."/>
            <person name="Robison K."/>
            <person name="Church G.M."/>
        </authorList>
    </citation>
    <scope>PROTEIN SEQUENCE OF 2-12</scope>
    <source>
        <strain>K12 / EMG2</strain>
    </source>
</reference>
<reference key="7">
    <citation type="journal article" date="1987" name="FEMS Microbiol. Lett.">
        <title>Differential roles of the Escherichia coli fumarases and fnr-dependent expression of fumarase B and aspartase.</title>
        <authorList>
            <person name="Woods S.A."/>
            <person name="Guest J.R."/>
        </authorList>
    </citation>
    <scope>FUNCTION</scope>
    <scope>INDUCTION</scope>
</reference>
<reference key="8">
    <citation type="journal article" date="1988" name="Biochim. Biophys. Acta">
        <title>Two biochemically distinct classes of fumarase in Escherichia coli.</title>
        <authorList>
            <person name="Woods S.A."/>
            <person name="Shwartzbach S.D."/>
            <person name="Guest J.R."/>
        </authorList>
    </citation>
    <scope>FUNCTION</scope>
    <scope>SUBUNIT</scope>
    <source>
        <strain>K12</strain>
    </source>
</reference>
<reference key="9">
    <citation type="journal article" date="1992" name="Biochemistry">
        <title>Fumarase a from Escherichia coli: purification and characterization as an iron-sulfur cluster containing enzyme.</title>
        <authorList>
            <person name="Flint D.H."/>
            <person name="Emptage M.H."/>
            <person name="Guest J.R."/>
        </authorList>
    </citation>
    <scope>FUNCTION</scope>
    <scope>CATALYTIC ACTIVITY</scope>
    <scope>COFACTOR</scope>
    <scope>BIOPHYSICOCHEMICAL PROPERTIES</scope>
    <scope>ACTIVITY REGULATION</scope>
    <scope>SUBUNIT</scope>
    <source>
        <strain>K12</strain>
    </source>
</reference>
<reference key="10">
    <citation type="journal article" date="1993" name="Biochemistry">
        <title>Escherichia coli fumarase A catalyzes the isomerization of enol and keto oxalacetic acid.</title>
        <authorList>
            <person name="Flint D.H."/>
        </authorList>
    </citation>
    <scope>FUNCTION</scope>
    <scope>CATALYTIC ACTIVITY</scope>
    <scope>BIOPHYSICOCHEMICAL PROPERTIES</scope>
    <scope>ACTIVITY REGULATION</scope>
    <source>
        <strain>K12</strain>
    </source>
</reference>
<reference key="11">
    <citation type="journal article" date="2013" name="PLoS ONE">
        <title>Biochemical similarities and differences between the catalytic [4Fe-4S] cluster containing fumarases FumA and FumB from Escherichia coli.</title>
        <authorList>
            <person name="van Vugt-Lussenburg B.M."/>
            <person name="van der Weel L."/>
            <person name="Hagen W.R."/>
            <person name="Hagedoorn P.L."/>
        </authorList>
    </citation>
    <scope>FUNCTION</scope>
    <scope>CATALYTIC ACTIVITY</scope>
    <scope>COFACTOR</scope>
    <scope>SUBSTRATE SPECIFICITY</scope>
    <scope>BIOPHYSICOCHEMICAL PROPERTIES</scope>
    <scope>ACTIVITY REGULATION</scope>
    <source>
        <strain>K12</strain>
    </source>
</reference>
<protein>
    <recommendedName>
        <fullName evidence="9">Fumarate hydratase class I, aerobic</fullName>
        <ecNumber evidence="2 3 5">4.2.1.2</ecNumber>
    </recommendedName>
    <alternativeName>
        <fullName evidence="8">Fumarase A</fullName>
    </alternativeName>
    <alternativeName>
        <fullName evidence="11">Oxaloacetate keto--enol-isomerase</fullName>
        <shortName evidence="11">OAAKE isomerase</shortName>
    </alternativeName>
    <alternativeName>
        <fullName evidence="13">Oxaloacetate tautomerase</fullName>
        <ecNumber evidence="5">5.3.2.2</ecNumber>
    </alternativeName>
</protein>
<comment type="function">
    <text evidence="2 3 4 5 7">Catalyzes the reversible hydration of fumarate to (S)-malate. Functions as an aerobic enzyme in the direction of malate formation as part of the citric acid cycle. Accounts for about 80% of the fumarase activity when the bacteria grow aerobically. To a lesser extent, also displays D-tartrate dehydratase activity in vitro, but is not able to convert (R)-malate, L-tartrate or meso-tartrate. Can also catalyze the isomerization of enol- to keto-oxaloacetate.</text>
</comment>
<comment type="catalytic activity">
    <reaction evidence="2 3 5">
        <text>(S)-malate = fumarate + H2O</text>
        <dbReference type="Rhea" id="RHEA:12460"/>
        <dbReference type="ChEBI" id="CHEBI:15377"/>
        <dbReference type="ChEBI" id="CHEBI:15589"/>
        <dbReference type="ChEBI" id="CHEBI:29806"/>
        <dbReference type="EC" id="4.2.1.2"/>
    </reaction>
</comment>
<comment type="catalytic activity">
    <reaction evidence="5">
        <text>oxaloacetate = enol-oxaloacetate</text>
        <dbReference type="Rhea" id="RHEA:16021"/>
        <dbReference type="ChEBI" id="CHEBI:16452"/>
        <dbReference type="ChEBI" id="CHEBI:17479"/>
        <dbReference type="EC" id="5.3.2.2"/>
    </reaction>
</comment>
<comment type="cofactor">
    <cofactor evidence="2 3">
        <name>[4Fe-4S] cluster</name>
        <dbReference type="ChEBI" id="CHEBI:49883"/>
    </cofactor>
    <text evidence="2 3">Binds 1 [4Fe-4S] cluster per subunit.</text>
</comment>
<comment type="activity regulation">
    <text evidence="2 3 5">Is inactivated by oxygen, due to oxidation of the Fe-S cluster to its [3Fe-4S] form. Both the fumarase and the isomerase reactions are competitively inhibited by 3-hydroxy-2-nitropropionate. The isomerase reaction is also inhibited by fumarate and malate.</text>
</comment>
<comment type="biophysicochemical properties">
    <kinetics>
        <KM evidence="2 3">0.7 mM for (S)-malate</KM>
        <KM evidence="5">0.6 mM for fumarate</KM>
        <KM evidence="3">0.46 mM for fumarate</KM>
        <KM evidence="3">0.8 mM for D-tartrate</KM>
        <KM evidence="5">0.1 mM for enol-oxaloacetate</KM>
        <Vmax evidence="3">720.0 umol/min/mg enzyme for (S)-malate dehydration</Vmax>
        <Vmax evidence="3">1900.0 umol/min/mg enzyme for fumarate hydration</Vmax>
        <Vmax evidence="3">2.3 umol/min/mg enzyme for D-tartrate dehydration</Vmax>
        <text evidence="5">kcat is 3000 sec(-1) for the hydration of fumarate and 300 sec(-1) for the isomerization of enol-oxaloacetate.</text>
    </kinetics>
</comment>
<comment type="pathway">
    <text evidence="8 9">Carbohydrate metabolism; tricarboxylic acid cycle; (S)-malate from fumarate: step 1/1.</text>
</comment>
<comment type="subunit">
    <text evidence="2 4">Homodimer.</text>
</comment>
<comment type="interaction">
    <interactant intactId="EBI-549075">
        <id>P0AC33</id>
    </interactant>
    <interactant intactId="EBI-549075">
        <id>P0AC33</id>
        <label>fumA</label>
    </interactant>
    <organismsDiffer>false</organismsDiffer>
    <experiments>2</experiments>
</comment>
<comment type="induction">
    <text evidence="7">Is expressed under aerobic conditions. Is repressed by glucose and anaerobiosis.</text>
</comment>
<comment type="similarity">
    <text evidence="12">Belongs to the class-I fumarase family.</text>
</comment>
<keyword id="KW-0004">4Fe-4S</keyword>
<keyword id="KW-0903">Direct protein sequencing</keyword>
<keyword id="KW-0408">Iron</keyword>
<keyword id="KW-0411">Iron-sulfur</keyword>
<keyword id="KW-0413">Isomerase</keyword>
<keyword id="KW-0456">Lyase</keyword>
<keyword id="KW-0479">Metal-binding</keyword>
<keyword id="KW-1185">Reference proteome</keyword>
<keyword id="KW-0816">Tricarboxylic acid cycle</keyword>
<dbReference type="EC" id="4.2.1.2" evidence="2 3 5"/>
<dbReference type="EC" id="5.3.2.2" evidence="5"/>
<dbReference type="EMBL" id="X00522">
    <property type="protein sequence ID" value="CAA25204.1"/>
    <property type="molecule type" value="Genomic_DNA"/>
</dbReference>
<dbReference type="EMBL" id="AP009048">
    <property type="protein sequence ID" value="BAA15360.1"/>
    <property type="molecule type" value="Genomic_DNA"/>
</dbReference>
<dbReference type="EMBL" id="U00096">
    <property type="protein sequence ID" value="AAC74684.1"/>
    <property type="molecule type" value="Genomic_DNA"/>
</dbReference>
<dbReference type="PIR" id="A03531">
    <property type="entry name" value="UFECAQ"/>
</dbReference>
<dbReference type="RefSeq" id="NP_416129.1">
    <property type="nucleotide sequence ID" value="NC_000913.3"/>
</dbReference>
<dbReference type="SMR" id="P0AC33"/>
<dbReference type="BioGRID" id="4263122">
    <property type="interactions" value="22"/>
</dbReference>
<dbReference type="BioGRID" id="851167">
    <property type="interactions" value="1"/>
</dbReference>
<dbReference type="DIP" id="DIP-36200N"/>
<dbReference type="FunCoup" id="P0AC33">
    <property type="interactions" value="214"/>
</dbReference>
<dbReference type="IntAct" id="P0AC33">
    <property type="interactions" value="5"/>
</dbReference>
<dbReference type="STRING" id="511145.b1612"/>
<dbReference type="jPOST" id="P0AC33"/>
<dbReference type="PaxDb" id="511145-b1612"/>
<dbReference type="EnsemblBacteria" id="AAC74684">
    <property type="protein sequence ID" value="AAC74684"/>
    <property type="gene ID" value="b1612"/>
</dbReference>
<dbReference type="GeneID" id="946826"/>
<dbReference type="KEGG" id="ecj:JW1604"/>
<dbReference type="KEGG" id="eco:b1612"/>
<dbReference type="KEGG" id="ecoc:C3026_09275"/>
<dbReference type="PATRIC" id="fig|1411691.4.peg.650"/>
<dbReference type="EchoBASE" id="EB0351"/>
<dbReference type="eggNOG" id="COG1838">
    <property type="taxonomic scope" value="Bacteria"/>
</dbReference>
<dbReference type="eggNOG" id="COG1951">
    <property type="taxonomic scope" value="Bacteria"/>
</dbReference>
<dbReference type="HOGENOM" id="CLU_026758_0_0_6"/>
<dbReference type="InParanoid" id="P0AC33"/>
<dbReference type="OMA" id="AGVLPMC"/>
<dbReference type="OrthoDB" id="9798978at2"/>
<dbReference type="PhylomeDB" id="P0AC33"/>
<dbReference type="BioCyc" id="EcoCyc:FUMA-MONOMER"/>
<dbReference type="BioCyc" id="MetaCyc:FUMA-MONOMER"/>
<dbReference type="BRENDA" id="4.2.1.2">
    <property type="organism ID" value="2026"/>
</dbReference>
<dbReference type="BRENDA" id="4.2.1.34">
    <property type="organism ID" value="2026"/>
</dbReference>
<dbReference type="SABIO-RK" id="P0AC33"/>
<dbReference type="UniPathway" id="UPA00223">
    <property type="reaction ID" value="UER01007"/>
</dbReference>
<dbReference type="PRO" id="PR:P0AC33"/>
<dbReference type="Proteomes" id="UP000000625">
    <property type="component" value="Chromosome"/>
</dbReference>
<dbReference type="GO" id="GO:0005829">
    <property type="term" value="C:cytosol"/>
    <property type="evidence" value="ECO:0007005"/>
    <property type="project" value="UniProtKB"/>
</dbReference>
<dbReference type="GO" id="GO:0051539">
    <property type="term" value="F:4 iron, 4 sulfur cluster binding"/>
    <property type="evidence" value="ECO:0000314"/>
    <property type="project" value="EcoCyc"/>
</dbReference>
<dbReference type="GO" id="GO:0004333">
    <property type="term" value="F:fumarate hydratase activity"/>
    <property type="evidence" value="ECO:0000314"/>
    <property type="project" value="EcoliWiki"/>
</dbReference>
<dbReference type="GO" id="GO:0042802">
    <property type="term" value="F:identical protein binding"/>
    <property type="evidence" value="ECO:0000353"/>
    <property type="project" value="IntAct"/>
</dbReference>
<dbReference type="GO" id="GO:0046872">
    <property type="term" value="F:metal ion binding"/>
    <property type="evidence" value="ECO:0007669"/>
    <property type="project" value="UniProtKB-KW"/>
</dbReference>
<dbReference type="GO" id="GO:0050163">
    <property type="term" value="F:oxaloacetate tautomerase activity"/>
    <property type="evidence" value="ECO:0000314"/>
    <property type="project" value="EcoCyc"/>
</dbReference>
<dbReference type="GO" id="GO:0042803">
    <property type="term" value="F:protein homodimerization activity"/>
    <property type="evidence" value="ECO:0000314"/>
    <property type="project" value="EcoCyc"/>
</dbReference>
<dbReference type="GO" id="GO:0006099">
    <property type="term" value="P:tricarboxylic acid cycle"/>
    <property type="evidence" value="ECO:0000315"/>
    <property type="project" value="EcoCyc"/>
</dbReference>
<dbReference type="FunFam" id="3.20.130.10:FF:000001">
    <property type="entry name" value="Fumarate hydratase class I"/>
    <property type="match status" value="1"/>
</dbReference>
<dbReference type="Gene3D" id="3.20.130.10">
    <property type="entry name" value="Fe-S hydro-lyase, tartrate dehydratase beta-type, catalytic domain"/>
    <property type="match status" value="1"/>
</dbReference>
<dbReference type="InterPro" id="IPR051208">
    <property type="entry name" value="Class-I_Fumarase/Tartrate_DH"/>
</dbReference>
<dbReference type="InterPro" id="IPR004646">
    <property type="entry name" value="Fe-S_hydro-lyase_TtdA-typ_cat"/>
</dbReference>
<dbReference type="InterPro" id="IPR004647">
    <property type="entry name" value="Fe-S_hydro-lyase_TtdB-typ_cat"/>
</dbReference>
<dbReference type="InterPro" id="IPR036660">
    <property type="entry name" value="Fe-S_hydroAse_TtdB_cat_sf"/>
</dbReference>
<dbReference type="InterPro" id="IPR011167">
    <property type="entry name" value="Fe_dep_fumarate_hydratase"/>
</dbReference>
<dbReference type="InterPro" id="IPR020557">
    <property type="entry name" value="Fumarate_lyase_CS"/>
</dbReference>
<dbReference type="NCBIfam" id="NF011919">
    <property type="entry name" value="PRK15390.1"/>
    <property type="match status" value="1"/>
</dbReference>
<dbReference type="NCBIfam" id="NF011920">
    <property type="entry name" value="PRK15391.1"/>
    <property type="match status" value="1"/>
</dbReference>
<dbReference type="NCBIfam" id="TIGR00722">
    <property type="entry name" value="ttdA_fumA_fumB"/>
    <property type="match status" value="1"/>
</dbReference>
<dbReference type="NCBIfam" id="TIGR00723">
    <property type="entry name" value="ttdB_fumA_fumB"/>
    <property type="match status" value="1"/>
</dbReference>
<dbReference type="PANTHER" id="PTHR30389:SF0">
    <property type="entry name" value="FUMARATE HYDRATASE CLASS I, AEROBIC"/>
    <property type="match status" value="1"/>
</dbReference>
<dbReference type="PANTHER" id="PTHR30389">
    <property type="entry name" value="FUMARATE HYDRATASE-RELATED"/>
    <property type="match status" value="1"/>
</dbReference>
<dbReference type="Pfam" id="PF05681">
    <property type="entry name" value="Fumerase"/>
    <property type="match status" value="1"/>
</dbReference>
<dbReference type="Pfam" id="PF05683">
    <property type="entry name" value="Fumerase_C"/>
    <property type="match status" value="1"/>
</dbReference>
<dbReference type="PIRSF" id="PIRSF001394">
    <property type="entry name" value="Fe_dep_fumar_hy"/>
    <property type="match status" value="1"/>
</dbReference>
<dbReference type="SUPFAM" id="SSF117457">
    <property type="entry name" value="FumA C-terminal domain-like"/>
    <property type="match status" value="1"/>
</dbReference>
<dbReference type="PROSITE" id="PS00163">
    <property type="entry name" value="FUMARATE_LYASES"/>
    <property type="match status" value="1"/>
</dbReference>
<accession>P0AC33</accession>
<accession>P00923</accession>
<accession>P76889</accession>
<organism>
    <name type="scientific">Escherichia coli (strain K12)</name>
    <dbReference type="NCBI Taxonomy" id="83333"/>
    <lineage>
        <taxon>Bacteria</taxon>
        <taxon>Pseudomonadati</taxon>
        <taxon>Pseudomonadota</taxon>
        <taxon>Gammaproteobacteria</taxon>
        <taxon>Enterobacterales</taxon>
        <taxon>Enterobacteriaceae</taxon>
        <taxon>Escherichia</taxon>
    </lineage>
</organism>
<feature type="initiator methionine" description="Removed" evidence="6">
    <location>
        <position position="1"/>
    </location>
</feature>
<feature type="chain" id="PRO_0000195656" description="Fumarate hydratase class I, aerobic">
    <location>
        <begin position="2"/>
        <end position="548"/>
    </location>
</feature>
<feature type="binding site" evidence="1">
    <location>
        <position position="105"/>
    </location>
    <ligand>
        <name>[4Fe-4S] cluster</name>
        <dbReference type="ChEBI" id="CHEBI:49883"/>
    </ligand>
</feature>
<feature type="binding site" evidence="1">
    <location>
        <position position="224"/>
    </location>
    <ligand>
        <name>[4Fe-4S] cluster</name>
        <dbReference type="ChEBI" id="CHEBI:49883"/>
    </ligand>
</feature>
<feature type="binding site" evidence="1">
    <location>
        <position position="318"/>
    </location>
    <ligand>
        <name>[4Fe-4S] cluster</name>
        <dbReference type="ChEBI" id="CHEBI:49883"/>
    </ligand>
</feature>
<evidence type="ECO:0000250" key="1">
    <source>
        <dbReference type="UniProtKB" id="E9AE57"/>
    </source>
</evidence>
<evidence type="ECO:0000269" key="2">
    <source>
    </source>
</evidence>
<evidence type="ECO:0000269" key="3">
    <source>
    </source>
</evidence>
<evidence type="ECO:0000269" key="4">
    <source>
    </source>
</evidence>
<evidence type="ECO:0000269" key="5">
    <source>
    </source>
</evidence>
<evidence type="ECO:0000269" key="6">
    <source>
    </source>
</evidence>
<evidence type="ECO:0000269" key="7">
    <source ref="7"/>
</evidence>
<evidence type="ECO:0000303" key="8">
    <source>
    </source>
</evidence>
<evidence type="ECO:0000303" key="9">
    <source>
    </source>
</evidence>
<evidence type="ECO:0000303" key="10">
    <source>
    </source>
</evidence>
<evidence type="ECO:0000303" key="11">
    <source>
    </source>
</evidence>
<evidence type="ECO:0000305" key="12"/>
<evidence type="ECO:0000305" key="13">
    <source>
    </source>
</evidence>
<proteinExistence type="evidence at protein level"/>
<gene>
    <name evidence="10" type="primary">fumA</name>
    <name type="ordered locus">b1612</name>
    <name type="ordered locus">JW1604</name>
</gene>
<name>FUMA_ECOLI</name>